<feature type="chain" id="PRO_0000202883" description="OTU domain-containing protein 2">
    <location>
        <begin position="1"/>
        <end position="307"/>
    </location>
</feature>
<feature type="domain" description="OTU" evidence="1">
    <location>
        <begin position="167"/>
        <end position="307"/>
    </location>
</feature>
<feature type="region of interest" description="Disordered" evidence="2">
    <location>
        <begin position="23"/>
        <end position="46"/>
    </location>
</feature>
<feature type="region of interest" description="Disordered" evidence="2">
    <location>
        <begin position="96"/>
        <end position="130"/>
    </location>
</feature>
<feature type="compositionally biased region" description="Low complexity" evidence="2">
    <location>
        <begin position="103"/>
        <end position="114"/>
    </location>
</feature>
<feature type="helix" evidence="5">
    <location>
        <begin position="14"/>
        <end position="36"/>
    </location>
</feature>
<feature type="helix" evidence="5">
    <location>
        <begin position="40"/>
        <end position="71"/>
    </location>
</feature>
<feature type="helix" evidence="5">
    <location>
        <begin position="86"/>
        <end position="91"/>
    </location>
</feature>
<feature type="helix" evidence="5">
    <location>
        <begin position="121"/>
        <end position="146"/>
    </location>
</feature>
<feature type="helix" evidence="4">
    <location>
        <begin position="150"/>
        <end position="164"/>
    </location>
</feature>
<feature type="strand" evidence="4">
    <location>
        <begin position="167"/>
        <end position="169"/>
    </location>
</feature>
<feature type="helix" evidence="4">
    <location>
        <begin position="178"/>
        <end position="190"/>
    </location>
</feature>
<feature type="helix" evidence="4">
    <location>
        <begin position="193"/>
        <end position="195"/>
    </location>
</feature>
<feature type="helix" evidence="4">
    <location>
        <begin position="202"/>
        <end position="215"/>
    </location>
</feature>
<feature type="helix" evidence="4">
    <location>
        <begin position="217"/>
        <end position="219"/>
    </location>
</feature>
<feature type="helix" evidence="4">
    <location>
        <begin position="221"/>
        <end position="224"/>
    </location>
</feature>
<feature type="turn" evidence="5">
    <location>
        <begin position="227"/>
        <end position="230"/>
    </location>
</feature>
<feature type="helix" evidence="4">
    <location>
        <begin position="235"/>
        <end position="244"/>
    </location>
</feature>
<feature type="helix" evidence="4">
    <location>
        <begin position="251"/>
        <end position="260"/>
    </location>
</feature>
<feature type="strand" evidence="4">
    <location>
        <begin position="265"/>
        <end position="268"/>
    </location>
</feature>
<feature type="strand" evidence="4">
    <location>
        <begin position="275"/>
        <end position="278"/>
    </location>
</feature>
<feature type="strand" evidence="5">
    <location>
        <begin position="281"/>
        <end position="283"/>
    </location>
</feature>
<feature type="strand" evidence="4">
    <location>
        <begin position="286"/>
        <end position="293"/>
    </location>
</feature>
<feature type="strand" evidence="4">
    <location>
        <begin position="300"/>
        <end position="306"/>
    </location>
</feature>
<sequence>MTGMESGENLENMEDILARHRKENKDLQNKITGMKKQATKSKRKEVNSKCLDLQDKLKTKQENEIRDWKIANNEVFDAEQEDEVTPEKLLEQLSISRDEKEQQNVPVQQQQQGQTKKRRNRQKERLAKRDAAIAKMKEEAALEASKQPDLKKMEQESIDQLCELKKLKQFDIQPDGHCLFASILDQLKLRHDPKKLDQDMDVMKLRWLSCNYVQEHRDDFIPYLFDEETMKMKDIDEYTKEMEHTAQWGGEIEILALSHVFDCPISILMSGRPIQVYNECGKNPELKLVYYKHSYALGEHYNSLHDS</sequence>
<reference key="1">
    <citation type="journal article" date="1994" name="Science">
        <title>Complete nucleotide sequence of Saccharomyces cerevisiae chromosome VIII.</title>
        <authorList>
            <person name="Johnston M."/>
            <person name="Andrews S."/>
            <person name="Brinkman R."/>
            <person name="Cooper J."/>
            <person name="Ding H."/>
            <person name="Dover J."/>
            <person name="Du Z."/>
            <person name="Favello A."/>
            <person name="Fulton L."/>
            <person name="Gattung S."/>
            <person name="Geisel C."/>
            <person name="Kirsten J."/>
            <person name="Kucaba T."/>
            <person name="Hillier L.W."/>
            <person name="Jier M."/>
            <person name="Johnston L."/>
            <person name="Langston Y."/>
            <person name="Latreille P."/>
            <person name="Louis E.J."/>
            <person name="Macri C."/>
            <person name="Mardis E."/>
            <person name="Menezes S."/>
            <person name="Mouser L."/>
            <person name="Nhan M."/>
            <person name="Rifkin L."/>
            <person name="Riles L."/>
            <person name="St Peter H."/>
            <person name="Trevaskis E."/>
            <person name="Vaughan K."/>
            <person name="Vignati D."/>
            <person name="Wilcox L."/>
            <person name="Wohldman P."/>
            <person name="Waterston R."/>
            <person name="Wilson R."/>
            <person name="Vaudin M."/>
        </authorList>
    </citation>
    <scope>NUCLEOTIDE SEQUENCE [LARGE SCALE GENOMIC DNA]</scope>
    <source>
        <strain>ATCC 204508 / S288c</strain>
    </source>
</reference>
<reference key="2">
    <citation type="journal article" date="2014" name="G3 (Bethesda)">
        <title>The reference genome sequence of Saccharomyces cerevisiae: Then and now.</title>
        <authorList>
            <person name="Engel S.R."/>
            <person name="Dietrich F.S."/>
            <person name="Fisk D.G."/>
            <person name="Binkley G."/>
            <person name="Balakrishnan R."/>
            <person name="Costanzo M.C."/>
            <person name="Dwight S.S."/>
            <person name="Hitz B.C."/>
            <person name="Karra K."/>
            <person name="Nash R.S."/>
            <person name="Weng S."/>
            <person name="Wong E.D."/>
            <person name="Lloyd P."/>
            <person name="Skrzypek M.S."/>
            <person name="Miyasato S.R."/>
            <person name="Simison M."/>
            <person name="Cherry J.M."/>
        </authorList>
    </citation>
    <scope>GENOME REANNOTATION</scope>
    <source>
        <strain>ATCC 204508 / S288c</strain>
    </source>
</reference>
<reference key="3">
    <citation type="journal article" date="2007" name="Genome Res.">
        <title>Approaching a complete repository of sequence-verified protein-encoding clones for Saccharomyces cerevisiae.</title>
        <authorList>
            <person name="Hu Y."/>
            <person name="Rolfs A."/>
            <person name="Bhullar B."/>
            <person name="Murthy T.V.S."/>
            <person name="Zhu C."/>
            <person name="Berger M.F."/>
            <person name="Camargo A.A."/>
            <person name="Kelley F."/>
            <person name="McCarron S."/>
            <person name="Jepson D."/>
            <person name="Richardson A."/>
            <person name="Raphael J."/>
            <person name="Moreira D."/>
            <person name="Taycher E."/>
            <person name="Zuo D."/>
            <person name="Mohr S."/>
            <person name="Kane M.F."/>
            <person name="Williamson J."/>
            <person name="Simpson A.J.G."/>
            <person name="Bulyk M.L."/>
            <person name="Harlow E."/>
            <person name="Marsischky G."/>
            <person name="Kolodner R.D."/>
            <person name="LaBaer J."/>
        </authorList>
    </citation>
    <scope>NUCLEOTIDE SEQUENCE [GENOMIC DNA]</scope>
    <source>
        <strain>ATCC 204508 / S288c</strain>
    </source>
</reference>
<reference key="4">
    <citation type="journal article" date="2003" name="Nature">
        <title>Global analysis of protein expression in yeast.</title>
        <authorList>
            <person name="Ghaemmaghami S."/>
            <person name="Huh W.-K."/>
            <person name="Bower K."/>
            <person name="Howson R.W."/>
            <person name="Belle A."/>
            <person name="Dephoure N."/>
            <person name="O'Shea E.K."/>
            <person name="Weissman J.S."/>
        </authorList>
    </citation>
    <scope>LEVEL OF PROTEIN EXPRESSION [LARGE SCALE ANALYSIS]</scope>
</reference>
<reference key="5">
    <citation type="journal article" date="2012" name="Proc. Natl. Acad. Sci. U.S.A.">
        <title>N-terminal acetylome analyses and functional insights of the N-terminal acetyltransferase NatB.</title>
        <authorList>
            <person name="Van Damme P."/>
            <person name="Lasa M."/>
            <person name="Polevoda B."/>
            <person name="Gazquez C."/>
            <person name="Elosegui-Artola A."/>
            <person name="Kim D.S."/>
            <person name="De Juan-Pardo E."/>
            <person name="Demeyer K."/>
            <person name="Hole K."/>
            <person name="Larrea E."/>
            <person name="Timmerman E."/>
            <person name="Prieto J."/>
            <person name="Arnesen T."/>
            <person name="Sherman F."/>
            <person name="Gevaert K."/>
            <person name="Aldabe R."/>
        </authorList>
    </citation>
    <scope>IDENTIFICATION BY MASS SPECTROMETRY [LARGE SCALE ANALYSIS]</scope>
</reference>
<gene>
    <name type="primary">OTU2</name>
    <name type="ordered locus">YHL013C</name>
</gene>
<dbReference type="EMBL" id="U11582">
    <property type="protein sequence ID" value="AAB65066.1"/>
    <property type="molecule type" value="Genomic_DNA"/>
</dbReference>
<dbReference type="EMBL" id="AY692608">
    <property type="protein sequence ID" value="AAT92627.1"/>
    <property type="molecule type" value="Genomic_DNA"/>
</dbReference>
<dbReference type="EMBL" id="BK006934">
    <property type="protein sequence ID" value="DAA06673.1"/>
    <property type="molecule type" value="Genomic_DNA"/>
</dbReference>
<dbReference type="PIR" id="S46827">
    <property type="entry name" value="S46827"/>
</dbReference>
<dbReference type="RefSeq" id="NP_011850.1">
    <property type="nucleotide sequence ID" value="NM_001179093.1"/>
</dbReference>
<dbReference type="PDB" id="7PL7">
    <property type="method" value="X-ray"/>
    <property type="resolution" value="2.60 A"/>
    <property type="chains" value="A=145-307"/>
</dbReference>
<dbReference type="PDB" id="8C83">
    <property type="method" value="EM"/>
    <property type="resolution" value="3.00 A"/>
    <property type="chains" value="x=1-307"/>
</dbReference>
<dbReference type="PDB" id="8CAH">
    <property type="method" value="EM"/>
    <property type="resolution" value="3.00 A"/>
    <property type="chains" value="G=1-307"/>
</dbReference>
<dbReference type="PDB" id="8CAS">
    <property type="method" value="EM"/>
    <property type="resolution" value="3.30 A"/>
    <property type="chains" value="x=1-307"/>
</dbReference>
<dbReference type="PDB" id="8CBJ">
    <property type="method" value="EM"/>
    <property type="resolution" value="3.80 A"/>
    <property type="chains" value="K=1-307"/>
</dbReference>
<dbReference type="PDBsum" id="7PL7"/>
<dbReference type="PDBsum" id="8C83"/>
<dbReference type="PDBsum" id="8CAH"/>
<dbReference type="PDBsum" id="8CAS"/>
<dbReference type="PDBsum" id="8CBJ"/>
<dbReference type="EMDB" id="EMD-16470"/>
<dbReference type="EMDB" id="EMD-16525"/>
<dbReference type="EMDB" id="EMD-16533"/>
<dbReference type="EMDB" id="EMD-16541"/>
<dbReference type="SMR" id="P38747"/>
<dbReference type="BioGRID" id="36410">
    <property type="interactions" value="171"/>
</dbReference>
<dbReference type="FunCoup" id="P38747">
    <property type="interactions" value="787"/>
</dbReference>
<dbReference type="IntAct" id="P38747">
    <property type="interactions" value="60"/>
</dbReference>
<dbReference type="STRING" id="4932.YHL013C"/>
<dbReference type="MEROPS" id="C85.008"/>
<dbReference type="iPTMnet" id="P38747"/>
<dbReference type="PaxDb" id="4932-YHL013C"/>
<dbReference type="PeptideAtlas" id="P38747"/>
<dbReference type="EnsemblFungi" id="YHL013C_mRNA">
    <property type="protein sequence ID" value="YHL013C"/>
    <property type="gene ID" value="YHL013C"/>
</dbReference>
<dbReference type="GeneID" id="856373"/>
<dbReference type="KEGG" id="sce:YHL013C"/>
<dbReference type="AGR" id="SGD:S000001005"/>
<dbReference type="SGD" id="S000001005">
    <property type="gene designation" value="OTU2"/>
</dbReference>
<dbReference type="VEuPathDB" id="FungiDB:YHL013C"/>
<dbReference type="eggNOG" id="KOG2606">
    <property type="taxonomic scope" value="Eukaryota"/>
</dbReference>
<dbReference type="GeneTree" id="ENSGT00940000166759"/>
<dbReference type="HOGENOM" id="CLU_034963_2_0_1"/>
<dbReference type="InParanoid" id="P38747"/>
<dbReference type="OMA" id="YELGAHY"/>
<dbReference type="OrthoDB" id="415023at2759"/>
<dbReference type="BioCyc" id="YEAST:G3O-31033-MONOMER"/>
<dbReference type="BioGRID-ORCS" id="856373">
    <property type="hits" value="1 hit in 10 CRISPR screens"/>
</dbReference>
<dbReference type="CD-CODE" id="E03F929F">
    <property type="entry name" value="Stress granule"/>
</dbReference>
<dbReference type="PRO" id="PR:P38747"/>
<dbReference type="Proteomes" id="UP000002311">
    <property type="component" value="Chromosome VIII"/>
</dbReference>
<dbReference type="RNAct" id="P38747">
    <property type="molecule type" value="protein"/>
</dbReference>
<dbReference type="GO" id="GO:0005737">
    <property type="term" value="C:cytoplasm"/>
    <property type="evidence" value="ECO:0007005"/>
    <property type="project" value="SGD"/>
</dbReference>
<dbReference type="GO" id="GO:0004843">
    <property type="term" value="F:cysteine-type deubiquitinase activity"/>
    <property type="evidence" value="ECO:0000318"/>
    <property type="project" value="GO_Central"/>
</dbReference>
<dbReference type="CDD" id="cd22762">
    <property type="entry name" value="OTU_fungi_OTU2-like"/>
    <property type="match status" value="1"/>
</dbReference>
<dbReference type="FunFam" id="3.90.70.80:FF:000022">
    <property type="entry name" value="OTU2p protein"/>
    <property type="match status" value="1"/>
</dbReference>
<dbReference type="Gene3D" id="3.90.70.80">
    <property type="match status" value="1"/>
</dbReference>
<dbReference type="InterPro" id="IPR049771">
    <property type="entry name" value="OTU2-like_OTU"/>
</dbReference>
<dbReference type="InterPro" id="IPR003323">
    <property type="entry name" value="OTU_dom"/>
</dbReference>
<dbReference type="InterPro" id="IPR038765">
    <property type="entry name" value="Papain-like_cys_pep_sf"/>
</dbReference>
<dbReference type="InterPro" id="IPR050704">
    <property type="entry name" value="Peptidase_C85-like"/>
</dbReference>
<dbReference type="PANTHER" id="PTHR12419:SF10">
    <property type="entry name" value="DEUBIQUITINASE OTUD6B"/>
    <property type="match status" value="1"/>
</dbReference>
<dbReference type="PANTHER" id="PTHR12419">
    <property type="entry name" value="OTU DOMAIN CONTAINING PROTEIN"/>
    <property type="match status" value="1"/>
</dbReference>
<dbReference type="Pfam" id="PF02338">
    <property type="entry name" value="OTU"/>
    <property type="match status" value="1"/>
</dbReference>
<dbReference type="SUPFAM" id="SSF54001">
    <property type="entry name" value="Cysteine proteinases"/>
    <property type="match status" value="1"/>
</dbReference>
<dbReference type="PROSITE" id="PS50802">
    <property type="entry name" value="OTU"/>
    <property type="match status" value="1"/>
</dbReference>
<keyword id="KW-0002">3D-structure</keyword>
<keyword id="KW-1185">Reference proteome</keyword>
<name>OTU2_YEAST</name>
<organism>
    <name type="scientific">Saccharomyces cerevisiae (strain ATCC 204508 / S288c)</name>
    <name type="common">Baker's yeast</name>
    <dbReference type="NCBI Taxonomy" id="559292"/>
    <lineage>
        <taxon>Eukaryota</taxon>
        <taxon>Fungi</taxon>
        <taxon>Dikarya</taxon>
        <taxon>Ascomycota</taxon>
        <taxon>Saccharomycotina</taxon>
        <taxon>Saccharomycetes</taxon>
        <taxon>Saccharomycetales</taxon>
        <taxon>Saccharomycetaceae</taxon>
        <taxon>Saccharomyces</taxon>
    </lineage>
</organism>
<evidence type="ECO:0000255" key="1">
    <source>
        <dbReference type="PROSITE-ProRule" id="PRU00139"/>
    </source>
</evidence>
<evidence type="ECO:0000256" key="2">
    <source>
        <dbReference type="SAM" id="MobiDB-lite"/>
    </source>
</evidence>
<evidence type="ECO:0000269" key="3">
    <source>
    </source>
</evidence>
<evidence type="ECO:0007829" key="4">
    <source>
        <dbReference type="PDB" id="7PL7"/>
    </source>
</evidence>
<evidence type="ECO:0007829" key="5">
    <source>
        <dbReference type="PDB" id="8C83"/>
    </source>
</evidence>
<comment type="miscellaneous">
    <text evidence="3">Present with 172 molecules/cell in log phase SD medium.</text>
</comment>
<proteinExistence type="evidence at protein level"/>
<accession>P38747</accession>
<accession>D3DKQ0</accession>
<protein>
    <recommendedName>
        <fullName>OTU domain-containing protein 2</fullName>
    </recommendedName>
</protein>